<comment type="function">
    <text evidence="1">Catalyzes the dephosphorylation of heptose(II) of the outer membrane lipopolysaccharide core.</text>
</comment>
<comment type="pathway">
    <text evidence="1">Bacterial outer membrane biogenesis; lipopolysaccharide metabolism.</text>
</comment>
<comment type="subcellular location">
    <subcellularLocation>
        <location evidence="1">Periplasm</location>
    </subcellularLocation>
</comment>
<comment type="similarity">
    <text evidence="1">Belongs to the phosphoglycerate mutase family. Ais subfamily.</text>
</comment>
<evidence type="ECO:0000255" key="1">
    <source>
        <dbReference type="HAMAP-Rule" id="MF_01868"/>
    </source>
</evidence>
<protein>
    <recommendedName>
        <fullName evidence="1">Lipopolysaccharide core heptose(II)-phosphate phosphatase</fullName>
        <ecNumber evidence="1">3.1.3.-</ecNumber>
    </recommendedName>
</protein>
<feature type="signal peptide" evidence="1">
    <location>
        <begin position="1"/>
        <end position="25"/>
    </location>
</feature>
<feature type="chain" id="PRO_1000216165" description="Lipopolysaccharide core heptose(II)-phosphate phosphatase">
    <location>
        <begin position="26"/>
        <end position="200"/>
    </location>
</feature>
<proteinExistence type="inferred from homology"/>
<dbReference type="EC" id="3.1.3.-" evidence="1"/>
<dbReference type="EMBL" id="CP001396">
    <property type="protein sequence ID" value="ACR62342.1"/>
    <property type="molecule type" value="Genomic_DNA"/>
</dbReference>
<dbReference type="RefSeq" id="WP_000879112.1">
    <property type="nucleotide sequence ID" value="NC_012759.1"/>
</dbReference>
<dbReference type="SMR" id="C4ZU94"/>
<dbReference type="KEGG" id="ebw:BWG_2025"/>
<dbReference type="HOGENOM" id="CLU_106705_1_0_6"/>
<dbReference type="UniPathway" id="UPA00451"/>
<dbReference type="GO" id="GO:0042597">
    <property type="term" value="C:periplasmic space"/>
    <property type="evidence" value="ECO:0007669"/>
    <property type="project" value="UniProtKB-SubCell"/>
</dbReference>
<dbReference type="GO" id="GO:0016791">
    <property type="term" value="F:phosphatase activity"/>
    <property type="evidence" value="ECO:0007669"/>
    <property type="project" value="UniProtKB-UniRule"/>
</dbReference>
<dbReference type="GO" id="GO:0008653">
    <property type="term" value="P:lipopolysaccharide metabolic process"/>
    <property type="evidence" value="ECO:0007669"/>
    <property type="project" value="UniProtKB-UniRule"/>
</dbReference>
<dbReference type="CDD" id="cd07040">
    <property type="entry name" value="HP"/>
    <property type="match status" value="1"/>
</dbReference>
<dbReference type="Gene3D" id="3.40.50.1240">
    <property type="entry name" value="Phosphoglycerate mutase-like"/>
    <property type="match status" value="1"/>
</dbReference>
<dbReference type="HAMAP" id="MF_01868">
    <property type="entry name" value="Ais"/>
    <property type="match status" value="1"/>
</dbReference>
<dbReference type="InterPro" id="IPR013078">
    <property type="entry name" value="His_Pase_superF_clade-1"/>
</dbReference>
<dbReference type="InterPro" id="IPR029033">
    <property type="entry name" value="His_PPase_superfam"/>
</dbReference>
<dbReference type="InterPro" id="IPR011310">
    <property type="entry name" value="LipoPS_heptP_Pase"/>
</dbReference>
<dbReference type="NCBIfam" id="NF011945">
    <property type="entry name" value="PRK15416.1"/>
    <property type="match status" value="1"/>
</dbReference>
<dbReference type="Pfam" id="PF00300">
    <property type="entry name" value="His_Phos_1"/>
    <property type="match status" value="1"/>
</dbReference>
<dbReference type="PIRSF" id="PIRSF011416">
    <property type="entry name" value="Ais-TraG-AfrS"/>
    <property type="match status" value="1"/>
</dbReference>
<dbReference type="SUPFAM" id="SSF53254">
    <property type="entry name" value="Phosphoglycerate mutase-like"/>
    <property type="match status" value="1"/>
</dbReference>
<accession>C4ZU94</accession>
<reference key="1">
    <citation type="journal article" date="2009" name="J. Bacteriol.">
        <title>Genomic sequencing reveals regulatory mutations and recombinational events in the widely used MC4100 lineage of Escherichia coli K-12.</title>
        <authorList>
            <person name="Ferenci T."/>
            <person name="Zhou Z."/>
            <person name="Betteridge T."/>
            <person name="Ren Y."/>
            <person name="Liu Y."/>
            <person name="Feng L."/>
            <person name="Reeves P.R."/>
            <person name="Wang L."/>
        </authorList>
    </citation>
    <scope>NUCLEOTIDE SEQUENCE [LARGE SCALE GENOMIC DNA]</scope>
    <source>
        <strain>K12 / MC4100 / BW2952</strain>
    </source>
</reference>
<keyword id="KW-0378">Hydrolase</keyword>
<keyword id="KW-0574">Periplasm</keyword>
<keyword id="KW-0732">Signal</keyword>
<gene>
    <name evidence="1" type="primary">ais</name>
    <name type="ordered locus">BWG_2025</name>
</gene>
<organism>
    <name type="scientific">Escherichia coli (strain K12 / MC4100 / BW2952)</name>
    <dbReference type="NCBI Taxonomy" id="595496"/>
    <lineage>
        <taxon>Bacteria</taxon>
        <taxon>Pseudomonadati</taxon>
        <taxon>Pseudomonadota</taxon>
        <taxon>Gammaproteobacteria</taxon>
        <taxon>Enterobacterales</taxon>
        <taxon>Enterobacteriaceae</taxon>
        <taxon>Escherichia</taxon>
    </lineage>
</organism>
<sequence length="200" mass="22257">MLAFCRSSLKSKKYIIILLALAAIAGLGTHAAWSSNGLPRIDNKTLARLAQQHPVVVLFRHAERCDRSTNQCLSDKTGITVKGTQDARELGNAFSADIPDFDLYSSNTVRTIQSATWFSAGKKLTVDKRLLQCGNEIYSAIKDLQSKAPDKNIVIFTHNHCLTYIAKDKRDATFKPDYLDGLVMHVEKGKVYLDGEFVNH</sequence>
<name>AIS_ECOBW</name>